<keyword id="KW-0007">Acetylation</keyword>
<keyword id="KW-0963">Cytoplasm</keyword>
<keyword id="KW-0413">Isomerase</keyword>
<keyword id="KW-0597">Phosphoprotein</keyword>
<keyword id="KW-1185">Reference proteome</keyword>
<sequence>MALAYDPLFITSDKSLSAFDVASSPPQPMNLTQDELKRIAAYKAVEFVESGMVLGLGTGSTAKHAVDRIGELLRQGKLENIVGIPTSKKTQEQALSLGIPLSDLDAHPVIDLSIDGADEVDPFLNLVKGRGGSLLREKMIEGASKKFVVIVDDSKMVKHIGGSKLALPVEIVPFCWKFTAEKLRSLLEGYGCEANLRLGEKGKAFVTDNGNYIVDMHVEEDMGDLGAVSDAILRLPGVVEHGMFLDMASTVIIAGELGVKIKNKH</sequence>
<reference key="1">
    <citation type="journal article" date="1999" name="Nature">
        <title>Sequence and analysis of chromosome 2 of the plant Arabidopsis thaliana.</title>
        <authorList>
            <person name="Lin X."/>
            <person name="Kaul S."/>
            <person name="Rounsley S.D."/>
            <person name="Shea T.P."/>
            <person name="Benito M.-I."/>
            <person name="Town C.D."/>
            <person name="Fujii C.Y."/>
            <person name="Mason T.M."/>
            <person name="Bowman C.L."/>
            <person name="Barnstead M.E."/>
            <person name="Feldblyum T.V."/>
            <person name="Buell C.R."/>
            <person name="Ketchum K.A."/>
            <person name="Lee J.J."/>
            <person name="Ronning C.M."/>
            <person name="Koo H.L."/>
            <person name="Moffat K.S."/>
            <person name="Cronin L.A."/>
            <person name="Shen M."/>
            <person name="Pai G."/>
            <person name="Van Aken S."/>
            <person name="Umayam L."/>
            <person name="Tallon L.J."/>
            <person name="Gill J.E."/>
            <person name="Adams M.D."/>
            <person name="Carrera A.J."/>
            <person name="Creasy T.H."/>
            <person name="Goodman H.M."/>
            <person name="Somerville C.R."/>
            <person name="Copenhaver G.P."/>
            <person name="Preuss D."/>
            <person name="Nierman W.C."/>
            <person name="White O."/>
            <person name="Eisen J.A."/>
            <person name="Salzberg S.L."/>
            <person name="Fraser C.M."/>
            <person name="Venter J.C."/>
        </authorList>
    </citation>
    <scope>NUCLEOTIDE SEQUENCE [LARGE SCALE GENOMIC DNA]</scope>
    <source>
        <strain>cv. Columbia</strain>
    </source>
</reference>
<reference key="2">
    <citation type="journal article" date="2017" name="Plant J.">
        <title>Araport11: a complete reannotation of the Arabidopsis thaliana reference genome.</title>
        <authorList>
            <person name="Cheng C.Y."/>
            <person name="Krishnakumar V."/>
            <person name="Chan A.P."/>
            <person name="Thibaud-Nissen F."/>
            <person name="Schobel S."/>
            <person name="Town C.D."/>
        </authorList>
    </citation>
    <scope>GENOME REANNOTATION</scope>
    <source>
        <strain>cv. Columbia</strain>
    </source>
</reference>
<reference key="3">
    <citation type="journal article" date="2006" name="Plant Biotechnol. J.">
        <title>Simultaneous high-throughput recombinational cloning of open reading frames in closed and open configurations.</title>
        <authorList>
            <person name="Underwood B.A."/>
            <person name="Vanderhaeghen R."/>
            <person name="Whitford R."/>
            <person name="Town C.D."/>
            <person name="Hilson P."/>
        </authorList>
    </citation>
    <scope>NUCLEOTIDE SEQUENCE [LARGE SCALE GENOMIC DNA]</scope>
    <source>
        <strain>cv. Columbia</strain>
    </source>
</reference>
<reference key="4">
    <citation type="journal article" date="2003" name="Science">
        <title>Empirical analysis of transcriptional activity in the Arabidopsis genome.</title>
        <authorList>
            <person name="Yamada K."/>
            <person name="Lim J."/>
            <person name="Dale J.M."/>
            <person name="Chen H."/>
            <person name="Shinn P."/>
            <person name="Palm C.J."/>
            <person name="Southwick A.M."/>
            <person name="Wu H.C."/>
            <person name="Kim C.J."/>
            <person name="Nguyen M."/>
            <person name="Pham P.K."/>
            <person name="Cheuk R.F."/>
            <person name="Karlin-Newmann G."/>
            <person name="Liu S.X."/>
            <person name="Lam B."/>
            <person name="Sakano H."/>
            <person name="Wu T."/>
            <person name="Yu G."/>
            <person name="Miranda M."/>
            <person name="Quach H.L."/>
            <person name="Tripp M."/>
            <person name="Chang C.H."/>
            <person name="Lee J.M."/>
            <person name="Toriumi M.J."/>
            <person name="Chan M.M."/>
            <person name="Tang C.C."/>
            <person name="Onodera C.S."/>
            <person name="Deng J.M."/>
            <person name="Akiyama K."/>
            <person name="Ansari Y."/>
            <person name="Arakawa T."/>
            <person name="Banh J."/>
            <person name="Banno F."/>
            <person name="Bowser L."/>
            <person name="Brooks S.Y."/>
            <person name="Carninci P."/>
            <person name="Chao Q."/>
            <person name="Choy N."/>
            <person name="Enju A."/>
            <person name="Goldsmith A.D."/>
            <person name="Gurjal M."/>
            <person name="Hansen N.F."/>
            <person name="Hayashizaki Y."/>
            <person name="Johnson-Hopson C."/>
            <person name="Hsuan V.W."/>
            <person name="Iida K."/>
            <person name="Karnes M."/>
            <person name="Khan S."/>
            <person name="Koesema E."/>
            <person name="Ishida J."/>
            <person name="Jiang P.X."/>
            <person name="Jones T."/>
            <person name="Kawai J."/>
            <person name="Kamiya A."/>
            <person name="Meyers C."/>
            <person name="Nakajima M."/>
            <person name="Narusaka M."/>
            <person name="Seki M."/>
            <person name="Sakurai T."/>
            <person name="Satou M."/>
            <person name="Tamse R."/>
            <person name="Vaysberg M."/>
            <person name="Wallender E.K."/>
            <person name="Wong C."/>
            <person name="Yamamura Y."/>
            <person name="Yuan S."/>
            <person name="Shinozaki K."/>
            <person name="Davis R.W."/>
            <person name="Theologis A."/>
            <person name="Ecker J.R."/>
        </authorList>
    </citation>
    <scope>NUCLEOTIDE SEQUENCE [LARGE SCALE MRNA]</scope>
    <source>
        <strain>cv. Columbia</strain>
    </source>
</reference>
<reference key="5">
    <citation type="journal article" date="2009" name="Physiol. Plantarum">
        <title>Deficiency in a cytosolic ribose-5-phosphate isomerase causes chloroplast dysfunction, late flowering and premature cell death in Arabidopsis.</title>
        <authorList>
            <person name="Xiong Y."/>
            <person name="DeFraia C."/>
            <person name="Williams D."/>
            <person name="Zhang X."/>
            <person name="Mou Z."/>
        </authorList>
    </citation>
    <scope>FUNCTION</scope>
    <scope>CATALYTIC ACTIVITY</scope>
    <scope>SUBCELLULAR LOCATION</scope>
    <scope>DISRUPTION PHENOTYPE</scope>
</reference>
<reference key="6">
    <citation type="journal article" date="2012" name="Mol. Cell. Proteomics">
        <title>Comparative large-scale characterisation of plant vs. mammal proteins reveals similar and idiosyncratic N-alpha acetylation features.</title>
        <authorList>
            <person name="Bienvenut W.V."/>
            <person name="Sumpton D."/>
            <person name="Martinez A."/>
            <person name="Lilla S."/>
            <person name="Espagne C."/>
            <person name="Meinnel T."/>
            <person name="Giglione C."/>
        </authorList>
    </citation>
    <scope>ACETYLATION [LARGE SCALE ANALYSIS] AT ALA-2</scope>
    <scope>CLEAVAGE OF INITIATOR METHIONINE [LARGE SCALE ANALYSIS]</scope>
    <scope>IDENTIFICATION BY MASS SPECTROMETRY [LARGE SCALE ANALYSIS]</scope>
</reference>
<accession>Q9ZU38</accession>
<accession>Q1PFB3</accession>
<gene>
    <name type="primary">RPI2</name>
    <name type="ordered locus">At2g01290</name>
    <name type="ORF">F10A8.17</name>
</gene>
<proteinExistence type="evidence at protein level"/>
<feature type="initiator methionine" description="Removed" evidence="4">
    <location>
        <position position="1"/>
    </location>
</feature>
<feature type="chain" id="PRO_0000158525" description="Probable ribose-5-phosphate isomerase 2">
    <location>
        <begin position="2"/>
        <end position="265"/>
    </location>
</feature>
<feature type="modified residue" description="N-acetylalanine" evidence="4">
    <location>
        <position position="2"/>
    </location>
</feature>
<feature type="modified residue" description="Phosphoserine" evidence="1">
    <location>
        <position position="96"/>
    </location>
</feature>
<evidence type="ECO:0000250" key="1">
    <source>
        <dbReference type="UniProtKB" id="Q9S726"/>
    </source>
</evidence>
<evidence type="ECO:0000269" key="2">
    <source>
    </source>
</evidence>
<evidence type="ECO:0000305" key="3"/>
<evidence type="ECO:0007744" key="4">
    <source>
    </source>
</evidence>
<organism>
    <name type="scientific">Arabidopsis thaliana</name>
    <name type="common">Mouse-ear cress</name>
    <dbReference type="NCBI Taxonomy" id="3702"/>
    <lineage>
        <taxon>Eukaryota</taxon>
        <taxon>Viridiplantae</taxon>
        <taxon>Streptophyta</taxon>
        <taxon>Embryophyta</taxon>
        <taxon>Tracheophyta</taxon>
        <taxon>Spermatophyta</taxon>
        <taxon>Magnoliopsida</taxon>
        <taxon>eudicotyledons</taxon>
        <taxon>Gunneridae</taxon>
        <taxon>Pentapetalae</taxon>
        <taxon>rosids</taxon>
        <taxon>malvids</taxon>
        <taxon>Brassicales</taxon>
        <taxon>Brassicaceae</taxon>
        <taxon>Camelineae</taxon>
        <taxon>Arabidopsis</taxon>
    </lineage>
</organism>
<comment type="function">
    <text evidence="2">Catalyzes the reversible conversion of ribose-5-phosphate to ribulose 5-phosphate.</text>
</comment>
<comment type="catalytic activity">
    <reaction evidence="2">
        <text>aldehydo-D-ribose 5-phosphate = D-ribulose 5-phosphate</text>
        <dbReference type="Rhea" id="RHEA:14657"/>
        <dbReference type="ChEBI" id="CHEBI:58121"/>
        <dbReference type="ChEBI" id="CHEBI:58273"/>
        <dbReference type="EC" id="5.3.1.6"/>
    </reaction>
</comment>
<comment type="pathway">
    <text>Carbohydrate degradation; pentose phosphate pathway; D-ribose 5-phosphate from D-ribulose 5-phosphate (non-oxidative stage): step 1/1.</text>
</comment>
<comment type="subcellular location">
    <subcellularLocation>
        <location evidence="2">Cytoplasm</location>
    </subcellularLocation>
</comment>
<comment type="disruption phenotype">
    <text evidence="2">Retarded growth and slight chlorosis due to decreased chloroplast photosynthetic capacity. Reduced accumulation of starch in leaves. Late flowering when grown under short-day conditions.</text>
</comment>
<comment type="similarity">
    <text evidence="3">Belongs to the ribose 5-phosphate isomerase family.</text>
</comment>
<dbReference type="EC" id="5.3.1.6"/>
<dbReference type="EMBL" id="AC006200">
    <property type="protein sequence ID" value="AAD14529.1"/>
    <property type="molecule type" value="Genomic_DNA"/>
</dbReference>
<dbReference type="EMBL" id="CP002685">
    <property type="protein sequence ID" value="AEC05429.1"/>
    <property type="molecule type" value="Genomic_DNA"/>
</dbReference>
<dbReference type="EMBL" id="DQ446450">
    <property type="protein sequence ID" value="ABE65420.1"/>
    <property type="molecule type" value="Genomic_DNA"/>
</dbReference>
<dbReference type="EMBL" id="AY054172">
    <property type="protein sequence ID" value="AAL06833.1"/>
    <property type="molecule type" value="mRNA"/>
</dbReference>
<dbReference type="EMBL" id="AY066038">
    <property type="protein sequence ID" value="AAL47405.1"/>
    <property type="molecule type" value="mRNA"/>
</dbReference>
<dbReference type="PIR" id="H84422">
    <property type="entry name" value="H84422"/>
</dbReference>
<dbReference type="RefSeq" id="NP_178238.1">
    <property type="nucleotide sequence ID" value="NM_126190.1"/>
</dbReference>
<dbReference type="SMR" id="Q9ZU38"/>
<dbReference type="BioGRID" id="61">
    <property type="interactions" value="2"/>
</dbReference>
<dbReference type="FunCoup" id="Q9ZU38">
    <property type="interactions" value="3377"/>
</dbReference>
<dbReference type="IntAct" id="Q9ZU38">
    <property type="interactions" value="1"/>
</dbReference>
<dbReference type="STRING" id="3702.Q9ZU38"/>
<dbReference type="iPTMnet" id="Q9ZU38"/>
<dbReference type="PaxDb" id="3702-AT2G01290.1"/>
<dbReference type="ProteomicsDB" id="226918"/>
<dbReference type="EnsemblPlants" id="AT2G01290.1">
    <property type="protein sequence ID" value="AT2G01290.1"/>
    <property type="gene ID" value="AT2G01290"/>
</dbReference>
<dbReference type="GeneID" id="814657"/>
<dbReference type="Gramene" id="AT2G01290.1">
    <property type="protein sequence ID" value="AT2G01290.1"/>
    <property type="gene ID" value="AT2G01290"/>
</dbReference>
<dbReference type="KEGG" id="ath:AT2G01290"/>
<dbReference type="Araport" id="AT2G01290"/>
<dbReference type="TAIR" id="AT2G01290">
    <property type="gene designation" value="RPI2"/>
</dbReference>
<dbReference type="eggNOG" id="KOG3075">
    <property type="taxonomic scope" value="Eukaryota"/>
</dbReference>
<dbReference type="HOGENOM" id="CLU_056590_1_2_1"/>
<dbReference type="InParanoid" id="Q9ZU38"/>
<dbReference type="OMA" id="KLRNDCK"/>
<dbReference type="PhylomeDB" id="Q9ZU38"/>
<dbReference type="BioCyc" id="ARA:AT2G01290-MONOMER"/>
<dbReference type="BRENDA" id="5.3.1.6">
    <property type="organism ID" value="399"/>
</dbReference>
<dbReference type="UniPathway" id="UPA00115">
    <property type="reaction ID" value="UER00412"/>
</dbReference>
<dbReference type="PRO" id="PR:Q9ZU38"/>
<dbReference type="Proteomes" id="UP000006548">
    <property type="component" value="Chromosome 2"/>
</dbReference>
<dbReference type="ExpressionAtlas" id="Q9ZU38">
    <property type="expression patterns" value="baseline and differential"/>
</dbReference>
<dbReference type="GO" id="GO:0005737">
    <property type="term" value="C:cytoplasm"/>
    <property type="evidence" value="ECO:0000314"/>
    <property type="project" value="TAIR"/>
</dbReference>
<dbReference type="GO" id="GO:0004751">
    <property type="term" value="F:ribose-5-phosphate isomerase activity"/>
    <property type="evidence" value="ECO:0000314"/>
    <property type="project" value="TAIR"/>
</dbReference>
<dbReference type="GO" id="GO:0008219">
    <property type="term" value="P:cell death"/>
    <property type="evidence" value="ECO:0000315"/>
    <property type="project" value="TAIR"/>
</dbReference>
<dbReference type="GO" id="GO:0009052">
    <property type="term" value="P:pentose-phosphate shunt, non-oxidative branch"/>
    <property type="evidence" value="ECO:0007669"/>
    <property type="project" value="InterPro"/>
</dbReference>
<dbReference type="GO" id="GO:0010228">
    <property type="term" value="P:vegetative to reproductive phase transition of meristem"/>
    <property type="evidence" value="ECO:0000315"/>
    <property type="project" value="TAIR"/>
</dbReference>
<dbReference type="CDD" id="cd01398">
    <property type="entry name" value="RPI_A"/>
    <property type="match status" value="1"/>
</dbReference>
<dbReference type="FunFam" id="3.30.70.260:FF:000069">
    <property type="entry name" value="Ribose-5-phosphate isomerase A"/>
    <property type="match status" value="1"/>
</dbReference>
<dbReference type="FunFam" id="3.40.50.1360:FF:000001">
    <property type="entry name" value="Ribose-5-phosphate isomerase A"/>
    <property type="match status" value="1"/>
</dbReference>
<dbReference type="Gene3D" id="3.30.70.260">
    <property type="match status" value="1"/>
</dbReference>
<dbReference type="Gene3D" id="3.40.50.1360">
    <property type="match status" value="1"/>
</dbReference>
<dbReference type="HAMAP" id="MF_00170">
    <property type="entry name" value="Rib_5P_isom_A"/>
    <property type="match status" value="1"/>
</dbReference>
<dbReference type="InterPro" id="IPR037171">
    <property type="entry name" value="NagB/RpiA_transferase-like"/>
</dbReference>
<dbReference type="InterPro" id="IPR050262">
    <property type="entry name" value="Ribose-5P_isomerase"/>
</dbReference>
<dbReference type="InterPro" id="IPR020672">
    <property type="entry name" value="Ribose5P_isomerase_typA_subgr"/>
</dbReference>
<dbReference type="InterPro" id="IPR004788">
    <property type="entry name" value="Ribose5P_isomerase_type_A"/>
</dbReference>
<dbReference type="NCBIfam" id="NF001924">
    <property type="entry name" value="PRK00702.1"/>
    <property type="match status" value="1"/>
</dbReference>
<dbReference type="NCBIfam" id="TIGR00021">
    <property type="entry name" value="rpiA"/>
    <property type="match status" value="1"/>
</dbReference>
<dbReference type="PANTHER" id="PTHR43748:SF2">
    <property type="entry name" value="RIBOSE-5-PHOSPHATE ISOMERASE 2-RELATED"/>
    <property type="match status" value="1"/>
</dbReference>
<dbReference type="PANTHER" id="PTHR43748">
    <property type="entry name" value="RIBOSE-5-PHOSPHATE ISOMERASE 3, CHLOROPLASTIC-RELATED"/>
    <property type="match status" value="1"/>
</dbReference>
<dbReference type="Pfam" id="PF06026">
    <property type="entry name" value="Rib_5-P_isom_A"/>
    <property type="match status" value="1"/>
</dbReference>
<dbReference type="SUPFAM" id="SSF75445">
    <property type="entry name" value="D-ribose-5-phosphate isomerase (RpiA), lid domain"/>
    <property type="match status" value="1"/>
</dbReference>
<dbReference type="SUPFAM" id="SSF100950">
    <property type="entry name" value="NagB/RpiA/CoA transferase-like"/>
    <property type="match status" value="1"/>
</dbReference>
<name>RPI2_ARATH</name>
<protein>
    <recommendedName>
        <fullName>Probable ribose-5-phosphate isomerase 2</fullName>
        <ecNumber>5.3.1.6</ecNumber>
    </recommendedName>
    <alternativeName>
        <fullName>Phosphoriboisomerase 2</fullName>
    </alternativeName>
</protein>